<dbReference type="EMBL" id="CP000127">
    <property type="protein sequence ID" value="ABA57035.1"/>
    <property type="molecule type" value="Genomic_DNA"/>
</dbReference>
<dbReference type="RefSeq" id="WP_011330372.1">
    <property type="nucleotide sequence ID" value="NC_007484.1"/>
</dbReference>
<dbReference type="SMR" id="Q3JDR1"/>
<dbReference type="FunCoup" id="Q3JDR1">
    <property type="interactions" value="75"/>
</dbReference>
<dbReference type="STRING" id="323261.Noc_0512"/>
<dbReference type="KEGG" id="noc:Noc_0512"/>
<dbReference type="eggNOG" id="COG3017">
    <property type="taxonomic scope" value="Bacteria"/>
</dbReference>
<dbReference type="HOGENOM" id="CLU_092816_2_1_6"/>
<dbReference type="InParanoid" id="Q3JDR1"/>
<dbReference type="Proteomes" id="UP000006838">
    <property type="component" value="Chromosome"/>
</dbReference>
<dbReference type="GO" id="GO:0009279">
    <property type="term" value="C:cell outer membrane"/>
    <property type="evidence" value="ECO:0007669"/>
    <property type="project" value="UniProtKB-SubCell"/>
</dbReference>
<dbReference type="GO" id="GO:0044874">
    <property type="term" value="P:lipoprotein localization to outer membrane"/>
    <property type="evidence" value="ECO:0007669"/>
    <property type="project" value="UniProtKB-UniRule"/>
</dbReference>
<dbReference type="GO" id="GO:0015031">
    <property type="term" value="P:protein transport"/>
    <property type="evidence" value="ECO:0007669"/>
    <property type="project" value="UniProtKB-KW"/>
</dbReference>
<dbReference type="CDD" id="cd16326">
    <property type="entry name" value="LolB"/>
    <property type="match status" value="1"/>
</dbReference>
<dbReference type="Gene3D" id="2.50.20.10">
    <property type="entry name" value="Lipoprotein localisation LolA/LolB/LppX"/>
    <property type="match status" value="1"/>
</dbReference>
<dbReference type="HAMAP" id="MF_00233">
    <property type="entry name" value="LolB"/>
    <property type="match status" value="1"/>
</dbReference>
<dbReference type="InterPro" id="IPR029046">
    <property type="entry name" value="LolA/LolB/LppX"/>
</dbReference>
<dbReference type="InterPro" id="IPR004565">
    <property type="entry name" value="OM_lipoprot_LolB"/>
</dbReference>
<dbReference type="NCBIfam" id="TIGR00548">
    <property type="entry name" value="lolB"/>
    <property type="match status" value="1"/>
</dbReference>
<dbReference type="Pfam" id="PF03550">
    <property type="entry name" value="LolB"/>
    <property type="match status" value="1"/>
</dbReference>
<dbReference type="SUPFAM" id="SSF89392">
    <property type="entry name" value="Prokaryotic lipoproteins and lipoprotein localization factors"/>
    <property type="match status" value="1"/>
</dbReference>
<dbReference type="PROSITE" id="PS51257">
    <property type="entry name" value="PROKAR_LIPOPROTEIN"/>
    <property type="match status" value="1"/>
</dbReference>
<feature type="signal peptide" evidence="1">
    <location>
        <begin position="1"/>
        <end position="18"/>
    </location>
</feature>
<feature type="chain" id="PRO_0000336612" description="Outer-membrane lipoprotein LolB">
    <location>
        <begin position="19"/>
        <end position="201"/>
    </location>
</feature>
<feature type="lipid moiety-binding region" description="N-palmitoyl cysteine" evidence="1">
    <location>
        <position position="19"/>
    </location>
</feature>
<feature type="lipid moiety-binding region" description="S-diacylglycerol cysteine" evidence="1">
    <location>
        <position position="19"/>
    </location>
</feature>
<organism>
    <name type="scientific">Nitrosococcus oceani (strain ATCC 19707 / BCRC 17464 / JCM 30415 / NCIMB 11848 / C-107)</name>
    <dbReference type="NCBI Taxonomy" id="323261"/>
    <lineage>
        <taxon>Bacteria</taxon>
        <taxon>Pseudomonadati</taxon>
        <taxon>Pseudomonadota</taxon>
        <taxon>Gammaproteobacteria</taxon>
        <taxon>Chromatiales</taxon>
        <taxon>Chromatiaceae</taxon>
        <taxon>Nitrosococcus</taxon>
    </lineage>
</organism>
<gene>
    <name evidence="1" type="primary">lolB</name>
    <name type="ordered locus">Noc_0512</name>
</gene>
<accession>Q3JDR1</accession>
<proteinExistence type="inferred from homology"/>
<name>LOLB_NITOC</name>
<reference key="1">
    <citation type="journal article" date="2006" name="Appl. Environ. Microbiol.">
        <title>Complete genome sequence of the marine, chemolithoautotrophic, ammonia-oxidizing bacterium Nitrosococcus oceani ATCC 19707.</title>
        <authorList>
            <person name="Klotz M.G."/>
            <person name="Arp D.J."/>
            <person name="Chain P.S.G."/>
            <person name="El-Sheikh A.F."/>
            <person name="Hauser L.J."/>
            <person name="Hommes N.G."/>
            <person name="Larimer F.W."/>
            <person name="Malfatti S.A."/>
            <person name="Norton J.M."/>
            <person name="Poret-Peterson A.T."/>
            <person name="Vergez L.M."/>
            <person name="Ward B.B."/>
        </authorList>
    </citation>
    <scope>NUCLEOTIDE SEQUENCE [LARGE SCALE GENOMIC DNA]</scope>
    <source>
        <strain>ATCC 19707 / BCRC 17464 / JCM 30415 / NCIMB 11848 / C-107</strain>
    </source>
</reference>
<sequence length="201" mass="23061">MKWCRLSIILMSLILLAGCMPLRQPSPSADPQQTWQERQFALQEIEDWNLSGRLAINAIKEAWTGTLRWTQRGDEFKILWLFPLGQGSVELYGNPDRVTLRAPKEEPMIATSAEELLGTRLGWSLPVSGLRYWLLGLPAPGLPVVKSSLDSFGRLLRLSQGGWQIRYLDYKWIENFALPGKIFLEHPKLRLRLVIDHWQLG</sequence>
<protein>
    <recommendedName>
        <fullName evidence="1">Outer-membrane lipoprotein LolB</fullName>
    </recommendedName>
</protein>
<keyword id="KW-0998">Cell outer membrane</keyword>
<keyword id="KW-0143">Chaperone</keyword>
<keyword id="KW-0449">Lipoprotein</keyword>
<keyword id="KW-0472">Membrane</keyword>
<keyword id="KW-0564">Palmitate</keyword>
<keyword id="KW-0653">Protein transport</keyword>
<keyword id="KW-1185">Reference proteome</keyword>
<keyword id="KW-0732">Signal</keyword>
<keyword id="KW-0813">Transport</keyword>
<evidence type="ECO:0000255" key="1">
    <source>
        <dbReference type="HAMAP-Rule" id="MF_00233"/>
    </source>
</evidence>
<comment type="function">
    <text evidence="1">Plays a critical role in the incorporation of lipoproteins in the outer membrane after they are released by the LolA protein.</text>
</comment>
<comment type="subunit">
    <text evidence="1">Monomer.</text>
</comment>
<comment type="subcellular location">
    <subcellularLocation>
        <location evidence="1">Cell outer membrane</location>
        <topology evidence="1">Lipid-anchor</topology>
    </subcellularLocation>
</comment>
<comment type="similarity">
    <text evidence="1">Belongs to the LolB family.</text>
</comment>